<proteinExistence type="inferred from homology"/>
<keyword id="KW-0121">Carboxypeptidase</keyword>
<keyword id="KW-1015">Disulfide bond</keyword>
<keyword id="KW-0325">Glycoprotein</keyword>
<keyword id="KW-0378">Hydrolase</keyword>
<keyword id="KW-0645">Protease</keyword>
<keyword id="KW-1185">Reference proteome</keyword>
<keyword id="KW-0732">Signal</keyword>
<keyword id="KW-0926">Vacuole</keyword>
<keyword id="KW-0865">Zymogen</keyword>
<gene>
    <name type="primary">CPYA</name>
    <name type="ORF">HCBG_08038</name>
</gene>
<organism>
    <name type="scientific">Ajellomyces capsulatus (strain G186AR / H82 / ATCC MYA-2454 / RMSCC 2432)</name>
    <name type="common">Darling's disease fungus</name>
    <name type="synonym">Histoplasma capsulatum</name>
    <dbReference type="NCBI Taxonomy" id="447093"/>
    <lineage>
        <taxon>Eukaryota</taxon>
        <taxon>Fungi</taxon>
        <taxon>Dikarya</taxon>
        <taxon>Ascomycota</taxon>
        <taxon>Pezizomycotina</taxon>
        <taxon>Eurotiomycetes</taxon>
        <taxon>Eurotiomycetidae</taxon>
        <taxon>Onygenales</taxon>
        <taxon>Ajellomycetaceae</taxon>
        <taxon>Histoplasma</taxon>
    </lineage>
</organism>
<comment type="function">
    <text evidence="1">Vacuolar carboxypeptidase involved in degradation of small peptides. Digests preferentially peptides containing an aliphatic or hydrophobic residue in P1' position, as well as methionine, leucine or phenylalanine in P1 position of ester substrate (By similarity).</text>
</comment>
<comment type="catalytic activity">
    <reaction evidence="3">
        <text>Release of a C-terminal amino acid with broad specificity.</text>
        <dbReference type="EC" id="3.4.16.5"/>
    </reaction>
</comment>
<comment type="subcellular location">
    <subcellularLocation>
        <location evidence="1">Vacuole</location>
    </subcellularLocation>
</comment>
<comment type="similarity">
    <text evidence="4">Belongs to the peptidase S10 family.</text>
</comment>
<evidence type="ECO:0000250" key="1"/>
<evidence type="ECO:0000255" key="2"/>
<evidence type="ECO:0000255" key="3">
    <source>
        <dbReference type="PROSITE-ProRule" id="PRU10074"/>
    </source>
</evidence>
<evidence type="ECO:0000305" key="4"/>
<name>CBPYA_AJECG</name>
<accession>C0NX46</accession>
<dbReference type="EC" id="3.4.16.5"/>
<dbReference type="EMBL" id="GG663375">
    <property type="protein sequence ID" value="EEH03912.1"/>
    <property type="molecule type" value="Genomic_DNA"/>
</dbReference>
<dbReference type="SMR" id="C0NX46"/>
<dbReference type="FunCoup" id="C0NX46">
    <property type="interactions" value="786"/>
</dbReference>
<dbReference type="STRING" id="447093.C0NX46"/>
<dbReference type="ESTHER" id="ajecg-cbpya">
    <property type="family name" value="Carboxypeptidase_S10"/>
</dbReference>
<dbReference type="MEROPS" id="S10.001"/>
<dbReference type="GlyCosmos" id="C0NX46">
    <property type="glycosylation" value="2 sites, No reported glycans"/>
</dbReference>
<dbReference type="VEuPathDB" id="FungiDB:I7I50_08293"/>
<dbReference type="HOGENOM" id="CLU_008523_10_4_1"/>
<dbReference type="InParanoid" id="C0NX46"/>
<dbReference type="Proteomes" id="UP000001631">
    <property type="component" value="Unassembled WGS sequence"/>
</dbReference>
<dbReference type="GO" id="GO:0000324">
    <property type="term" value="C:fungal-type vacuole"/>
    <property type="evidence" value="ECO:0007669"/>
    <property type="project" value="TreeGrafter"/>
</dbReference>
<dbReference type="GO" id="GO:0004185">
    <property type="term" value="F:serine-type carboxypeptidase activity"/>
    <property type="evidence" value="ECO:0007669"/>
    <property type="project" value="UniProtKB-EC"/>
</dbReference>
<dbReference type="GO" id="GO:0006508">
    <property type="term" value="P:proteolysis"/>
    <property type="evidence" value="ECO:0007669"/>
    <property type="project" value="UniProtKB-KW"/>
</dbReference>
<dbReference type="FunFam" id="1.10.287.410:FF:000001">
    <property type="entry name" value="Carboxypeptidase Y"/>
    <property type="match status" value="1"/>
</dbReference>
<dbReference type="Gene3D" id="1.10.287.410">
    <property type="match status" value="1"/>
</dbReference>
<dbReference type="Gene3D" id="3.40.50.1820">
    <property type="entry name" value="alpha/beta hydrolase"/>
    <property type="match status" value="1"/>
</dbReference>
<dbReference type="InterPro" id="IPR029058">
    <property type="entry name" value="AB_hydrolase_fold"/>
</dbReference>
<dbReference type="InterPro" id="IPR001563">
    <property type="entry name" value="Peptidase_S10"/>
</dbReference>
<dbReference type="InterPro" id="IPR008442">
    <property type="entry name" value="Propeptide_carboxypepY"/>
</dbReference>
<dbReference type="InterPro" id="IPR018202">
    <property type="entry name" value="Ser_caboxypep_ser_AS"/>
</dbReference>
<dbReference type="PANTHER" id="PTHR11802:SF113">
    <property type="entry name" value="SERINE CARBOXYPEPTIDASE CTSA-4.1"/>
    <property type="match status" value="1"/>
</dbReference>
<dbReference type="PANTHER" id="PTHR11802">
    <property type="entry name" value="SERINE PROTEASE FAMILY S10 SERINE CARBOXYPEPTIDASE"/>
    <property type="match status" value="1"/>
</dbReference>
<dbReference type="Pfam" id="PF05388">
    <property type="entry name" value="Carbpep_Y_N"/>
    <property type="match status" value="1"/>
</dbReference>
<dbReference type="Pfam" id="PF00450">
    <property type="entry name" value="Peptidase_S10"/>
    <property type="match status" value="1"/>
</dbReference>
<dbReference type="PRINTS" id="PR00724">
    <property type="entry name" value="CRBOXYPTASEC"/>
</dbReference>
<dbReference type="SUPFAM" id="SSF53474">
    <property type="entry name" value="alpha/beta-Hydrolases"/>
    <property type="match status" value="1"/>
</dbReference>
<dbReference type="PROSITE" id="PS00131">
    <property type="entry name" value="CARBOXYPEPT_SER_SER"/>
    <property type="match status" value="1"/>
</dbReference>
<protein>
    <recommendedName>
        <fullName>Carboxypeptidase Y homolog A</fullName>
        <ecNumber>3.4.16.5</ecNumber>
    </recommendedName>
</protein>
<sequence length="544" mass="60584">MKSLALALLVGGAIASGPQQQVLREPVDDPQAAETPLQKISDIFGHLSEQAGNVWEDVMDKFPDTLMDAITQTPPPKKHNRRPDSQWDHIVRGSDVQAVWVEGDAGEKHRKVGGRLDTYDLRVKAVDPSNLGIDTVKQYSGYLDDNENDKHLFYWFFESRNDPKNDPVVLWLNGGPGCSSLTGLFLELGPSSITKQLKVKYNEFSWNSNASVIFLDQPVNVGYSYSSSSVSNTQAAGKDVYALLTLFFEQFPEYSQQDFHIAGESYAGHYIPVFASEIMSHSHRNINLKSILVGNGLTDPLSQYPHYRPMACGEGGYPAVLSSSSCQAMDNALPRCLAMIQACYNTESRWSCVPASIYCNNALIGPYQRSGMNPYDVRSKCEGGNLCYTQLDDISKYLNQDAVMESLGAEVSSYESCNMDINRNFLFQGDWMQPYMRVVPTLLTQMPVLIYAGDADFICNWLGNKAWTEALEYPGHDEFAAAEMKNLTSLNHEDMKVIGQVKSAGNFTFMRLFGGGHMVPMDQPEASLEFFNRWLGGEWSAKSP</sequence>
<feature type="signal peptide" evidence="2">
    <location>
        <begin position="1"/>
        <end position="17"/>
    </location>
</feature>
<feature type="propeptide" id="PRO_0000407416" evidence="1">
    <location>
        <begin position="18"/>
        <end position="124"/>
    </location>
</feature>
<feature type="chain" id="PRO_0000407417" description="Carboxypeptidase Y homolog A">
    <location>
        <begin position="125"/>
        <end position="544"/>
    </location>
</feature>
<feature type="active site" evidence="3">
    <location>
        <position position="265"/>
    </location>
</feature>
<feature type="active site" evidence="3">
    <location>
        <position position="456"/>
    </location>
</feature>
<feature type="active site" evidence="3">
    <location>
        <position position="517"/>
    </location>
</feature>
<feature type="glycosylation site" description="N-linked (GlcNAc...) asparagine" evidence="2">
    <location>
        <position position="209"/>
    </location>
</feature>
<feature type="glycosylation site" description="N-linked (GlcNAc...) asparagine" evidence="2">
    <location>
        <position position="506"/>
    </location>
</feature>
<feature type="disulfide bond" evidence="1">
    <location>
        <begin position="178"/>
        <end position="417"/>
    </location>
</feature>
<feature type="disulfide bond" evidence="1">
    <location>
        <begin position="312"/>
        <end position="326"/>
    </location>
</feature>
<feature type="disulfide bond" evidence="1">
    <location>
        <begin position="336"/>
        <end position="359"/>
    </location>
</feature>
<feature type="disulfide bond" evidence="1">
    <location>
        <begin position="343"/>
        <end position="352"/>
    </location>
</feature>
<feature type="disulfide bond" evidence="1">
    <location>
        <begin position="381"/>
        <end position="387"/>
    </location>
</feature>
<reference key="1">
    <citation type="submission" date="2009-02" db="EMBL/GenBank/DDBJ databases">
        <title>The genome sequence of Ajellomyces capsulatus strain G186AR.</title>
        <authorList>
            <person name="Champion M."/>
            <person name="Cuomo C.A."/>
            <person name="Ma L.-J."/>
            <person name="Henn M.R."/>
            <person name="Sil A."/>
            <person name="Goldman B."/>
            <person name="Young S.K."/>
            <person name="Kodira C.D."/>
            <person name="Zeng Q."/>
            <person name="Koehrsen M."/>
            <person name="Alvarado L."/>
            <person name="Berlin A."/>
            <person name="Borenstein D."/>
            <person name="Chen Z."/>
            <person name="Engels R."/>
            <person name="Freedman E."/>
            <person name="Gellesch M."/>
            <person name="Goldberg J."/>
            <person name="Griggs A."/>
            <person name="Gujja S."/>
            <person name="Heiman D."/>
            <person name="Hepburn T."/>
            <person name="Howarth C."/>
            <person name="Jen D."/>
            <person name="Larson L."/>
            <person name="Lewis B."/>
            <person name="Mehta T."/>
            <person name="Park D."/>
            <person name="Pearson M."/>
            <person name="Roberts A."/>
            <person name="Saif S."/>
            <person name="Shea T."/>
            <person name="Shenoy N."/>
            <person name="Sisk P."/>
            <person name="Stolte C."/>
            <person name="Sykes S."/>
            <person name="Walk T."/>
            <person name="White J."/>
            <person name="Yandava C."/>
            <person name="Klein B."/>
            <person name="McEwen J.G."/>
            <person name="Puccia R."/>
            <person name="Goldman G.H."/>
            <person name="Felipe M.S."/>
            <person name="Nino-Vega G."/>
            <person name="San-Blas G."/>
            <person name="Taylor J."/>
            <person name="Mendoza L."/>
            <person name="Galagan J.E."/>
            <person name="Nusbaum C."/>
            <person name="Birren B.W."/>
        </authorList>
    </citation>
    <scope>NUCLEOTIDE SEQUENCE [LARGE SCALE GENOMIC DNA]</scope>
    <source>
        <strain>G186AR / H82 / ATCC MYA-2454 / RMSCC 2432</strain>
    </source>
</reference>